<accession>Q04592</accession>
<accession>E9QPB7</accession>
<accession>Q62040</accession>
<dbReference type="EC" id="3.4.21.-"/>
<dbReference type="EMBL" id="D17583">
    <property type="protein sequence ID" value="BAA04507.1"/>
    <property type="molecule type" value="mRNA"/>
</dbReference>
<dbReference type="EMBL" id="D12619">
    <property type="protein sequence ID" value="BAA02143.1"/>
    <property type="molecule type" value="mRNA"/>
</dbReference>
<dbReference type="EMBL" id="L14932">
    <property type="protein sequence ID" value="AAA74636.1"/>
    <property type="molecule type" value="mRNA"/>
</dbReference>
<dbReference type="EMBL" id="AC125203">
    <property type="status" value="NOT_ANNOTATED_CDS"/>
    <property type="molecule type" value="Genomic_DNA"/>
</dbReference>
<dbReference type="EMBL" id="AC126940">
    <property type="status" value="NOT_ANNOTATED_CDS"/>
    <property type="molecule type" value="Genomic_DNA"/>
</dbReference>
<dbReference type="EMBL" id="AC133509">
    <property type="status" value="NOT_ANNOTATED_CDS"/>
    <property type="molecule type" value="Genomic_DNA"/>
</dbReference>
<dbReference type="EMBL" id="AC147369">
    <property type="status" value="NOT_ANNOTATED_CDS"/>
    <property type="molecule type" value="Genomic_DNA"/>
</dbReference>
<dbReference type="CCDS" id="CCDS50401.1">
    <molecule id="Q04592-1"/>
</dbReference>
<dbReference type="CCDS" id="CCDS50402.1">
    <molecule id="Q04592-2"/>
</dbReference>
<dbReference type="PIR" id="A48225">
    <property type="entry name" value="A48225"/>
</dbReference>
<dbReference type="PIR" id="S34583">
    <property type="entry name" value="S34583"/>
</dbReference>
<dbReference type="RefSeq" id="NP_001156616.1">
    <molecule id="Q04592-2"/>
    <property type="nucleotide sequence ID" value="NM_001163144.1"/>
</dbReference>
<dbReference type="RefSeq" id="NP_001177412.1">
    <molecule id="Q04592-1"/>
    <property type="nucleotide sequence ID" value="NM_001190483.2"/>
</dbReference>
<dbReference type="SMR" id="Q04592"/>
<dbReference type="BioGRID" id="202061">
    <property type="interactions" value="4"/>
</dbReference>
<dbReference type="FunCoup" id="Q04592">
    <property type="interactions" value="318"/>
</dbReference>
<dbReference type="IntAct" id="Q04592">
    <property type="interactions" value="1"/>
</dbReference>
<dbReference type="MINT" id="Q04592"/>
<dbReference type="STRING" id="10090.ENSMUSP00000025618"/>
<dbReference type="GlyCosmos" id="Q04592">
    <property type="glycosylation" value="13 sites, No reported glycans"/>
</dbReference>
<dbReference type="GlyGen" id="Q04592">
    <property type="glycosylation" value="13 sites, 2 N-linked glycans (3 sites)"/>
</dbReference>
<dbReference type="iPTMnet" id="Q04592"/>
<dbReference type="PhosphoSitePlus" id="Q04592"/>
<dbReference type="PaxDb" id="10090-ENSMUSP00000025618"/>
<dbReference type="PeptideAtlas" id="Q04592"/>
<dbReference type="ProteomicsDB" id="294032">
    <molecule id="Q04592-1"/>
</dbReference>
<dbReference type="ProteomicsDB" id="294033">
    <molecule id="Q04592-2"/>
</dbReference>
<dbReference type="Antibodypedia" id="27199">
    <property type="antibodies" value="190 antibodies from 26 providers"/>
</dbReference>
<dbReference type="DNASU" id="18552"/>
<dbReference type="Ensembl" id="ENSMUST00000025618.16">
    <molecule id="Q04592-1"/>
    <property type="protein sequence ID" value="ENSMUSP00000025618.9"/>
    <property type="gene ID" value="ENSMUSG00000024713.17"/>
</dbReference>
<dbReference type="Ensembl" id="ENSMUST00000050715.10">
    <molecule id="Q04592-2"/>
    <property type="protein sequence ID" value="ENSMUSP00000050272.9"/>
    <property type="gene ID" value="ENSMUSG00000024713.17"/>
</dbReference>
<dbReference type="GeneID" id="18552"/>
<dbReference type="KEGG" id="mmu:18552"/>
<dbReference type="UCSC" id="uc008gxp.2">
    <molecule id="Q04592-1"/>
    <property type="organism name" value="mouse"/>
</dbReference>
<dbReference type="AGR" id="MGI:97515"/>
<dbReference type="CTD" id="5125"/>
<dbReference type="MGI" id="MGI:97515">
    <property type="gene designation" value="Pcsk5"/>
</dbReference>
<dbReference type="VEuPathDB" id="HostDB:ENSMUSG00000024713"/>
<dbReference type="eggNOG" id="KOG3525">
    <property type="taxonomic scope" value="Eukaryota"/>
</dbReference>
<dbReference type="GeneTree" id="ENSGT00940000155770"/>
<dbReference type="HOGENOM" id="CLU_003159_0_0_1"/>
<dbReference type="InParanoid" id="Q04592"/>
<dbReference type="OMA" id="CANNRYL"/>
<dbReference type="OrthoDB" id="300641at2759"/>
<dbReference type="PhylomeDB" id="Q04592"/>
<dbReference type="TreeFam" id="TF314277"/>
<dbReference type="BRENDA" id="3.4.21.B26">
    <property type="organism ID" value="3474"/>
</dbReference>
<dbReference type="Reactome" id="R-MMU-167060">
    <property type="pathway name" value="NGF processing"/>
</dbReference>
<dbReference type="Reactome" id="R-MMU-8963889">
    <property type="pathway name" value="Assembly of active LPL and LIPC lipase complexes"/>
</dbReference>
<dbReference type="BioGRID-ORCS" id="18552">
    <property type="hits" value="2 hits in 78 CRISPR screens"/>
</dbReference>
<dbReference type="ChiTaRS" id="Pcsk5">
    <property type="organism name" value="mouse"/>
</dbReference>
<dbReference type="PRO" id="PR:Q04592"/>
<dbReference type="Proteomes" id="UP000000589">
    <property type="component" value="Chromosome 19"/>
</dbReference>
<dbReference type="RNAct" id="Q04592">
    <property type="molecule type" value="protein"/>
</dbReference>
<dbReference type="Bgee" id="ENSMUSG00000024713">
    <property type="expression patterns" value="Expressed in external carotid artery and 253 other cell types or tissues"/>
</dbReference>
<dbReference type="ExpressionAtlas" id="Q04592">
    <property type="expression patterns" value="baseline and differential"/>
</dbReference>
<dbReference type="GO" id="GO:0005788">
    <property type="term" value="C:endoplasmic reticulum lumen"/>
    <property type="evidence" value="ECO:0000304"/>
    <property type="project" value="Reactome"/>
</dbReference>
<dbReference type="GO" id="GO:0005615">
    <property type="term" value="C:extracellular space"/>
    <property type="evidence" value="ECO:0000314"/>
    <property type="project" value="BHF-UCL"/>
</dbReference>
<dbReference type="GO" id="GO:0005794">
    <property type="term" value="C:Golgi apparatus"/>
    <property type="evidence" value="ECO:0000314"/>
    <property type="project" value="MGI"/>
</dbReference>
<dbReference type="GO" id="GO:0016020">
    <property type="term" value="C:membrane"/>
    <property type="evidence" value="ECO:0007669"/>
    <property type="project" value="UniProtKB-KW"/>
</dbReference>
<dbReference type="GO" id="GO:0030141">
    <property type="term" value="C:secretory granule"/>
    <property type="evidence" value="ECO:0000314"/>
    <property type="project" value="MGI"/>
</dbReference>
<dbReference type="GO" id="GO:0004175">
    <property type="term" value="F:endopeptidase activity"/>
    <property type="evidence" value="ECO:0000314"/>
    <property type="project" value="BHF-UCL"/>
</dbReference>
<dbReference type="GO" id="GO:0008233">
    <property type="term" value="F:peptidase activity"/>
    <property type="evidence" value="ECO:0000266"/>
    <property type="project" value="MGI"/>
</dbReference>
<dbReference type="GO" id="GO:0042277">
    <property type="term" value="F:peptide binding"/>
    <property type="evidence" value="ECO:0000314"/>
    <property type="project" value="BHF-UCL"/>
</dbReference>
<dbReference type="GO" id="GO:0004252">
    <property type="term" value="F:serine-type endopeptidase activity"/>
    <property type="evidence" value="ECO:0000314"/>
    <property type="project" value="BHF-UCL"/>
</dbReference>
<dbReference type="GO" id="GO:0009952">
    <property type="term" value="P:anterior/posterior pattern specification"/>
    <property type="evidence" value="ECO:0000315"/>
    <property type="project" value="BHF-UCL"/>
</dbReference>
<dbReference type="GO" id="GO:0003279">
    <property type="term" value="P:cardiac septum development"/>
    <property type="evidence" value="ECO:0000315"/>
    <property type="project" value="MGI"/>
</dbReference>
<dbReference type="GO" id="GO:0060976">
    <property type="term" value="P:coronary vasculature development"/>
    <property type="evidence" value="ECO:0000315"/>
    <property type="project" value="MGI"/>
</dbReference>
<dbReference type="GO" id="GO:0140447">
    <property type="term" value="P:cytokine precursor processing"/>
    <property type="evidence" value="ECO:0000314"/>
    <property type="project" value="BHF-UCL"/>
</dbReference>
<dbReference type="GO" id="GO:0007368">
    <property type="term" value="P:determination of left/right symmetry"/>
    <property type="evidence" value="ECO:0000315"/>
    <property type="project" value="MGI"/>
</dbReference>
<dbReference type="GO" id="GO:0007566">
    <property type="term" value="P:embryo implantation"/>
    <property type="evidence" value="ECO:0000315"/>
    <property type="project" value="BHF-UCL"/>
</dbReference>
<dbReference type="GO" id="GO:0048566">
    <property type="term" value="P:embryonic digestive tract development"/>
    <property type="evidence" value="ECO:0000315"/>
    <property type="project" value="BHF-UCL"/>
</dbReference>
<dbReference type="GO" id="GO:0048706">
    <property type="term" value="P:embryonic skeletal system development"/>
    <property type="evidence" value="ECO:0000315"/>
    <property type="project" value="BHF-UCL"/>
</dbReference>
<dbReference type="GO" id="GO:0007507">
    <property type="term" value="P:heart development"/>
    <property type="evidence" value="ECO:0000315"/>
    <property type="project" value="BHF-UCL"/>
</dbReference>
<dbReference type="GO" id="GO:0001822">
    <property type="term" value="P:kidney development"/>
    <property type="evidence" value="ECO:0000315"/>
    <property type="project" value="BHF-UCL"/>
</dbReference>
<dbReference type="GO" id="GO:0035108">
    <property type="term" value="P:limb morphogenesis"/>
    <property type="evidence" value="ECO:0000315"/>
    <property type="project" value="BHF-UCL"/>
</dbReference>
<dbReference type="GO" id="GO:0043043">
    <property type="term" value="P:peptide biosynthetic process"/>
    <property type="evidence" value="ECO:0000314"/>
    <property type="project" value="BHF-UCL"/>
</dbReference>
<dbReference type="GO" id="GO:0016486">
    <property type="term" value="P:peptide hormone processing"/>
    <property type="evidence" value="ECO:0000314"/>
    <property type="project" value="BHF-UCL"/>
</dbReference>
<dbReference type="GO" id="GO:0016485">
    <property type="term" value="P:protein processing"/>
    <property type="evidence" value="ECO:0000314"/>
    <property type="project" value="BHF-UCL"/>
</dbReference>
<dbReference type="GO" id="GO:0030323">
    <property type="term" value="P:respiratory tube development"/>
    <property type="evidence" value="ECO:0000315"/>
    <property type="project" value="BHF-UCL"/>
</dbReference>
<dbReference type="GO" id="GO:0019058">
    <property type="term" value="P:viral life cycle"/>
    <property type="evidence" value="ECO:0000314"/>
    <property type="project" value="BHF-UCL"/>
</dbReference>
<dbReference type="CDD" id="cd00064">
    <property type="entry name" value="FU"/>
    <property type="match status" value="17"/>
</dbReference>
<dbReference type="CDD" id="cd04059">
    <property type="entry name" value="Peptidases_S8_Protein_convertases_Kexins_Furin-like"/>
    <property type="match status" value="1"/>
</dbReference>
<dbReference type="FunFam" id="2.10.220.10:FF:000011">
    <property type="entry name" value="Proprotein convertase subtilisin/kexin type 5"/>
    <property type="match status" value="1"/>
</dbReference>
<dbReference type="FunFam" id="2.10.220.10:FF:000018">
    <property type="entry name" value="Proprotein convertase subtilisin/kexin type 5"/>
    <property type="match status" value="1"/>
</dbReference>
<dbReference type="FunFam" id="2.10.220.10:FF:000037">
    <property type="entry name" value="Proprotein convertase subtilisin/kexin type 5"/>
    <property type="match status" value="1"/>
</dbReference>
<dbReference type="FunFam" id="2.10.220.10:FF:000040">
    <property type="entry name" value="Proprotein convertase subtilisin/kexin type 5"/>
    <property type="match status" value="1"/>
</dbReference>
<dbReference type="FunFam" id="2.10.220.10:FF:000042">
    <property type="entry name" value="Proprotein convertase subtilisin/kexin type 5"/>
    <property type="match status" value="1"/>
</dbReference>
<dbReference type="FunFam" id="2.10.220.10:FF:000044">
    <property type="entry name" value="Proprotein convertase subtilisin/kexin type 5"/>
    <property type="match status" value="1"/>
</dbReference>
<dbReference type="FunFam" id="2.10.220.10:FF:000049">
    <property type="entry name" value="Proprotein convertase subtilisin/kexin type 5"/>
    <property type="match status" value="1"/>
</dbReference>
<dbReference type="FunFam" id="2.10.220.10:FF:000057">
    <property type="entry name" value="Proprotein convertase subtilisin/kexin type 5"/>
    <property type="match status" value="1"/>
</dbReference>
<dbReference type="FunFam" id="2.60.120.260:FF:000006">
    <property type="entry name" value="Proprotein convertase subtilisin/kexin type 5"/>
    <property type="match status" value="1"/>
</dbReference>
<dbReference type="FunFam" id="3.30.70.850:FF:000001">
    <property type="entry name" value="Proprotein convertase subtilisin/kexin type 5"/>
    <property type="match status" value="1"/>
</dbReference>
<dbReference type="FunFam" id="3.40.50.200:FF:000002">
    <property type="entry name" value="Proprotein convertase subtilisin/kexin type 5"/>
    <property type="match status" value="1"/>
</dbReference>
<dbReference type="FunFam" id="2.10.220.10:FF:000022">
    <property type="entry name" value="proprotein convertase subtilisin/kexin type 5 isoform X2"/>
    <property type="match status" value="1"/>
</dbReference>
<dbReference type="Gene3D" id="2.60.120.260">
    <property type="entry name" value="Galactose-binding domain-like"/>
    <property type="match status" value="1"/>
</dbReference>
<dbReference type="Gene3D" id="2.10.220.10">
    <property type="entry name" value="Hormone Receptor, Insulin-like Growth Factor Receptor 1, Chain A, domain 2"/>
    <property type="match status" value="15"/>
</dbReference>
<dbReference type="Gene3D" id="3.30.70.850">
    <property type="entry name" value="Peptidase S8, pro-domain"/>
    <property type="match status" value="1"/>
</dbReference>
<dbReference type="Gene3D" id="3.40.50.200">
    <property type="entry name" value="Peptidase S8/S53 domain"/>
    <property type="match status" value="1"/>
</dbReference>
<dbReference type="InterPro" id="IPR000742">
    <property type="entry name" value="EGF-like_dom"/>
</dbReference>
<dbReference type="InterPro" id="IPR006212">
    <property type="entry name" value="Furin_repeat"/>
</dbReference>
<dbReference type="InterPro" id="IPR008979">
    <property type="entry name" value="Galactose-bd-like_sf"/>
</dbReference>
<dbReference type="InterPro" id="IPR032778">
    <property type="entry name" value="GF_recep_IV"/>
</dbReference>
<dbReference type="InterPro" id="IPR009030">
    <property type="entry name" value="Growth_fac_rcpt_cys_sf"/>
</dbReference>
<dbReference type="InterPro" id="IPR034182">
    <property type="entry name" value="Kexin/furin"/>
</dbReference>
<dbReference type="InterPro" id="IPR002884">
    <property type="entry name" value="P_dom"/>
</dbReference>
<dbReference type="InterPro" id="IPR000209">
    <property type="entry name" value="Peptidase_S8/S53_dom"/>
</dbReference>
<dbReference type="InterPro" id="IPR036852">
    <property type="entry name" value="Peptidase_S8/S53_dom_sf"/>
</dbReference>
<dbReference type="InterPro" id="IPR023827">
    <property type="entry name" value="Peptidase_S8_Asp-AS"/>
</dbReference>
<dbReference type="InterPro" id="IPR022398">
    <property type="entry name" value="Peptidase_S8_His-AS"/>
</dbReference>
<dbReference type="InterPro" id="IPR023828">
    <property type="entry name" value="Peptidase_S8_Ser-AS"/>
</dbReference>
<dbReference type="InterPro" id="IPR015500">
    <property type="entry name" value="Peptidase_S8_subtilisin-rel"/>
</dbReference>
<dbReference type="InterPro" id="IPR032815">
    <property type="entry name" value="S8_pro-domain"/>
</dbReference>
<dbReference type="InterPro" id="IPR038466">
    <property type="entry name" value="S8_pro-domain_sf"/>
</dbReference>
<dbReference type="PANTHER" id="PTHR42884">
    <property type="entry name" value="PROPROTEIN CONVERTASE SUBTILISIN/KEXIN-RELATED"/>
    <property type="match status" value="1"/>
</dbReference>
<dbReference type="PANTHER" id="PTHR42884:SF7">
    <property type="entry name" value="PROPROTEIN CONVERTASE SUBTILISIN_KEXIN TYPE 5"/>
    <property type="match status" value="1"/>
</dbReference>
<dbReference type="Pfam" id="PF14843">
    <property type="entry name" value="GF_recep_IV"/>
    <property type="match status" value="1"/>
</dbReference>
<dbReference type="Pfam" id="PF01483">
    <property type="entry name" value="P_proprotein"/>
    <property type="match status" value="1"/>
</dbReference>
<dbReference type="Pfam" id="PF00082">
    <property type="entry name" value="Peptidase_S8"/>
    <property type="match status" value="1"/>
</dbReference>
<dbReference type="Pfam" id="PF16470">
    <property type="entry name" value="S8_pro-domain"/>
    <property type="match status" value="1"/>
</dbReference>
<dbReference type="PRINTS" id="PR00723">
    <property type="entry name" value="SUBTILISIN"/>
</dbReference>
<dbReference type="SMART" id="SM00181">
    <property type="entry name" value="EGF"/>
    <property type="match status" value="18"/>
</dbReference>
<dbReference type="SMART" id="SM00261">
    <property type="entry name" value="FU"/>
    <property type="match status" value="22"/>
</dbReference>
<dbReference type="SUPFAM" id="SSF49785">
    <property type="entry name" value="Galactose-binding domain-like"/>
    <property type="match status" value="1"/>
</dbReference>
<dbReference type="SUPFAM" id="SSF57184">
    <property type="entry name" value="Growth factor receptor domain"/>
    <property type="match status" value="8"/>
</dbReference>
<dbReference type="SUPFAM" id="SSF54897">
    <property type="entry name" value="Protease propeptides/inhibitors"/>
    <property type="match status" value="1"/>
</dbReference>
<dbReference type="SUPFAM" id="SSF52743">
    <property type="entry name" value="Subtilisin-like"/>
    <property type="match status" value="1"/>
</dbReference>
<dbReference type="PROSITE" id="PS51829">
    <property type="entry name" value="P_HOMO_B"/>
    <property type="match status" value="1"/>
</dbReference>
<dbReference type="PROSITE" id="PS51892">
    <property type="entry name" value="SUBTILASE"/>
    <property type="match status" value="1"/>
</dbReference>
<dbReference type="PROSITE" id="PS00136">
    <property type="entry name" value="SUBTILASE_ASP"/>
    <property type="match status" value="1"/>
</dbReference>
<dbReference type="PROSITE" id="PS00137">
    <property type="entry name" value="SUBTILASE_HIS"/>
    <property type="match status" value="1"/>
</dbReference>
<dbReference type="PROSITE" id="PS00138">
    <property type="entry name" value="SUBTILASE_SER"/>
    <property type="match status" value="1"/>
</dbReference>
<organism>
    <name type="scientific">Mus musculus</name>
    <name type="common">Mouse</name>
    <dbReference type="NCBI Taxonomy" id="10090"/>
    <lineage>
        <taxon>Eukaryota</taxon>
        <taxon>Metazoa</taxon>
        <taxon>Chordata</taxon>
        <taxon>Craniata</taxon>
        <taxon>Vertebrata</taxon>
        <taxon>Euteleostomi</taxon>
        <taxon>Mammalia</taxon>
        <taxon>Eutheria</taxon>
        <taxon>Euarchontoglires</taxon>
        <taxon>Glires</taxon>
        <taxon>Rodentia</taxon>
        <taxon>Myomorpha</taxon>
        <taxon>Muroidea</taxon>
        <taxon>Muridae</taxon>
        <taxon>Murinae</taxon>
        <taxon>Mus</taxon>
        <taxon>Mus</taxon>
    </lineage>
</organism>
<name>PCSK5_MOUSE</name>
<comment type="function">
    <text evidence="1">Serine endoprotease that processes various proproteins by cleavage at paired basic amino acids, recognizing the RXXX[KR]R consensus motif. Likely functions in the constitutive and regulated secretory pathways. Plays an essential role in pregnancy establishment by proteolytic activation of a number of important factors such as BMP2, CALD1 and alpha-integrins. May be responsible for the maturation of gastrointestinal peptides. May be involved in the cellular proliferation of adrenal cortex via the activation of growth factors.</text>
</comment>
<comment type="subcellular location">
    <molecule>Isoform PC5A</molecule>
    <subcellularLocation>
        <location>Secreted</location>
    </subcellularLocation>
    <text>Secreted through the regulated secretory pathway.</text>
</comment>
<comment type="subcellular location">
    <molecule>Isoform PC5B</molecule>
    <subcellularLocation>
        <location>Endomembrane system</location>
        <topology>Single-pass type I membrane protein</topology>
    </subcellularLocation>
    <text>Type I membrane protein localized to a paranuclear post-Golgi network compartment in communication with early endosomes.</text>
</comment>
<comment type="alternative products">
    <event type="alternative splicing"/>
    <isoform>
        <id>Q04592-1</id>
        <name>PC5B</name>
        <name>Long</name>
        <sequence type="displayed"/>
    </isoform>
    <isoform>
        <id>Q04592-2</id>
        <name>PC5A</name>
        <name>Short</name>
        <sequence type="described" ref="VSP_005438 VSP_005439"/>
    </isoform>
    <text>Additional isoforms seem to exist.</text>
</comment>
<comment type="tissue specificity">
    <text>PC5A is expressed in most tissues but is most abundant in the intestine and adrenals. PC5B is expressed in the intestine, adrenals and lung but not in the brain.</text>
</comment>
<comment type="developmental stage">
    <text evidence="5 6">Weakly expressed throughout the embryo, except in the developing nervous system, the ribs and the liver, but markedly up-regulated at discrete sites during development. At 6.5 dpc, prominent expression observed in differentiated decidua. At 7.5 dpc, intense expression in extraembryonic endoderm, amnion and nascent mesoderm. At 8.5 dpc, abundant expression in somites and yolk sac followed by a confinement to dermamyotome compartment. Between 9.5 dpc and 11.5 dpc, abundant expression in AER (thickened ectodermal cells of limb buds). At 12.5 dpc, expression in the limbs is confined to the condensing mesenchyme surrounding the cartilage. At this stage, strong expression also detected in vertebral and facial cartilage primordia and in the muscle of the tongue. At 16.5 dpc, abundant expression in epithelial cells of the intestinal villi. Isoform A is most abundant at all stages but significant levels of isoform B occur at 12.5 dpc.</text>
</comment>
<comment type="domain">
    <text>The propeptide domain acts as an intramolecular chaperone assisting the folding of the zymogen within the endoplasmic reticulum.</text>
</comment>
<comment type="domain">
    <text>AC 1 and AC 2 (clusters of acidic amino acids) contain sorting information. AC 1 directs TGN localization and interacts with the TGN sorting protein PACS-1.</text>
</comment>
<comment type="similarity">
    <text evidence="9">Belongs to the peptidase S8 family.</text>
</comment>
<proteinExistence type="evidence at protein level"/>
<protein>
    <recommendedName>
        <fullName>Proprotein convertase subtilisin/kexin type 5</fullName>
        <ecNumber>3.4.21.-</ecNumber>
    </recommendedName>
    <alternativeName>
        <fullName>Proprotein convertase 5</fullName>
        <shortName>PC5</shortName>
    </alternativeName>
    <alternativeName>
        <fullName>Proprotein convertase 6</fullName>
        <shortName>PC6</shortName>
    </alternativeName>
    <alternativeName>
        <fullName>Subtilisin-like proprotein convertase 6</fullName>
        <shortName>SPC6</shortName>
    </alternativeName>
    <alternativeName>
        <fullName>Subtilisin/kexin-like protease PC5</fullName>
    </alternativeName>
</protein>
<feature type="signal peptide">
    <location>
        <begin position="1"/>
        <end position="34"/>
    </location>
</feature>
<feature type="propeptide" id="PRO_0000027104">
    <location>
        <begin position="35"/>
        <end position="116"/>
    </location>
</feature>
<feature type="chain" id="PRO_0000027105" description="Proprotein convertase subtilisin/kexin type 5">
    <location>
        <begin position="117"/>
        <end position="1877"/>
    </location>
</feature>
<feature type="topological domain" description="Extracellular" evidence="2">
    <location>
        <begin position="117"/>
        <end position="1768"/>
    </location>
</feature>
<feature type="transmembrane region" description="Helical" evidence="2">
    <location>
        <begin position="1769"/>
        <end position="1789"/>
    </location>
</feature>
<feature type="topological domain" description="Cytoplasmic" evidence="2">
    <location>
        <begin position="1790"/>
        <end position="1877"/>
    </location>
</feature>
<feature type="domain" description="Peptidase S8" evidence="4">
    <location>
        <begin position="136"/>
        <end position="455"/>
    </location>
</feature>
<feature type="domain" description="P/Homo B" evidence="3">
    <location>
        <begin position="463"/>
        <end position="603"/>
    </location>
</feature>
<feature type="repeat" description="FU 1">
    <location>
        <begin position="632"/>
        <end position="682"/>
    </location>
</feature>
<feature type="repeat" description="FU 2">
    <location>
        <begin position="685"/>
        <end position="732"/>
    </location>
</feature>
<feature type="repeat" description="FU 3">
    <location>
        <begin position="736"/>
        <end position="779"/>
    </location>
</feature>
<feature type="repeat" description="FU 4">
    <location>
        <begin position="781"/>
        <end position="826"/>
    </location>
</feature>
<feature type="repeat" description="FU 5">
    <location>
        <begin position="834"/>
        <end position="881"/>
    </location>
</feature>
<feature type="repeat" description="FU 6">
    <location>
        <begin position="884"/>
        <end position="929"/>
    </location>
</feature>
<feature type="repeat" description="FU 7">
    <location>
        <begin position="931"/>
        <end position="981"/>
    </location>
</feature>
<feature type="repeat" description="FU 8">
    <location>
        <begin position="984"/>
        <end position="1030"/>
    </location>
</feature>
<feature type="repeat" description="FU 9">
    <location>
        <begin position="1034"/>
        <end position="1079"/>
    </location>
</feature>
<feature type="repeat" description="FU 10">
    <location>
        <begin position="1081"/>
        <end position="1123"/>
    </location>
</feature>
<feature type="repeat" description="FU 11">
    <location>
        <begin position="1127"/>
        <end position="1168"/>
    </location>
</feature>
<feature type="repeat" description="FU 12">
    <location>
        <begin position="1206"/>
        <end position="1248"/>
    </location>
</feature>
<feature type="repeat" description="FU 13">
    <location>
        <begin position="1252"/>
        <end position="1299"/>
    </location>
</feature>
<feature type="repeat" description="FU 14">
    <location>
        <begin position="1301"/>
        <end position="1345"/>
    </location>
</feature>
<feature type="repeat" description="FU 15">
    <location>
        <begin position="1347"/>
        <end position="1390"/>
    </location>
</feature>
<feature type="repeat" description="FU 16">
    <location>
        <begin position="1392"/>
        <end position="1438"/>
    </location>
</feature>
<feature type="repeat" description="FU 17">
    <location>
        <begin position="1442"/>
        <end position="1487"/>
    </location>
</feature>
<feature type="repeat" description="FU 18">
    <location>
        <begin position="1491"/>
        <end position="1536"/>
    </location>
</feature>
<feature type="repeat" description="FU 19">
    <location>
        <begin position="1540"/>
        <end position="1585"/>
    </location>
</feature>
<feature type="repeat" description="FU 20">
    <location>
        <begin position="1589"/>
        <end position="1636"/>
    </location>
</feature>
<feature type="repeat" description="FU 21">
    <location>
        <begin position="1640"/>
        <end position="1685"/>
    </location>
</feature>
<feature type="repeat" description="FU 22">
    <location>
        <begin position="1691"/>
        <end position="1738"/>
    </location>
</feature>
<feature type="region of interest" description="CRM (Cys-rich motif)">
    <location>
        <begin position="638"/>
        <end position="1753"/>
    </location>
</feature>
<feature type="region of interest" description="AC 1">
    <location>
        <begin position="1825"/>
        <end position="1844"/>
    </location>
</feature>
<feature type="region of interest" description="AC 2">
    <location>
        <begin position="1856"/>
        <end position="1877"/>
    </location>
</feature>
<feature type="short sequence motif" description="Cell attachment site" evidence="2">
    <location>
        <begin position="521"/>
        <end position="523"/>
    </location>
</feature>
<feature type="active site" description="Charge relay system" evidence="4">
    <location>
        <position position="173"/>
    </location>
</feature>
<feature type="active site" description="Charge relay system" evidence="4">
    <location>
        <position position="214"/>
    </location>
</feature>
<feature type="active site" description="Charge relay system" evidence="4">
    <location>
        <position position="388"/>
    </location>
</feature>
<feature type="site" description="Cleavage; by autolysis" evidence="1">
    <location>
        <begin position="116"/>
        <end position="117"/>
    </location>
</feature>
<feature type="glycosylation site" description="N-linked (GlcNAc...) asparagine" evidence="2">
    <location>
        <position position="227"/>
    </location>
</feature>
<feature type="glycosylation site" description="N-linked (GlcNAc...) asparagine" evidence="2">
    <location>
        <position position="383"/>
    </location>
</feature>
<feature type="glycosylation site" description="N-linked (GlcNAc...) asparagine" evidence="2">
    <location>
        <position position="667"/>
    </location>
</feature>
<feature type="glycosylation site" description="N-linked (GlcNAc...) asparagine" evidence="2">
    <location>
        <position position="754"/>
    </location>
</feature>
<feature type="glycosylation site" description="N-linked (GlcNAc...) asparagine" evidence="2">
    <location>
        <position position="804"/>
    </location>
</feature>
<feature type="glycosylation site" description="N-linked (GlcNAc...) asparagine" evidence="2">
    <location>
        <position position="854"/>
    </location>
</feature>
<feature type="glycosylation site" description="N-linked (GlcNAc...) asparagine" evidence="2">
    <location>
        <position position="951"/>
    </location>
</feature>
<feature type="glycosylation site" description="N-linked (GlcNAc...) asparagine" evidence="2">
    <location>
        <position position="1016"/>
    </location>
</feature>
<feature type="glycosylation site" description="N-linked (GlcNAc...) asparagine" evidence="2">
    <location>
        <position position="1220"/>
    </location>
</feature>
<feature type="glycosylation site" description="N-linked (GlcNAc...) asparagine" evidence="2">
    <location>
        <position position="1317"/>
    </location>
</feature>
<feature type="glycosylation site" description="N-linked (GlcNAc...) asparagine" evidence="2">
    <location>
        <position position="1523"/>
    </location>
</feature>
<feature type="glycosylation site" description="N-linked (GlcNAc...) asparagine" evidence="2">
    <location>
        <position position="1711"/>
    </location>
</feature>
<feature type="glycosylation site" description="N-linked (GlcNAc...) asparagine" evidence="2">
    <location>
        <position position="1733"/>
    </location>
</feature>
<feature type="splice variant" id="VSP_005438" description="In isoform PC5A." evidence="7 8">
    <original>GEYIDDQGHCQTCEASCAKCWGPTQEDCISCPVTRVLD</original>
    <variation>ATEESWAEGGFCMLVKKNNLCQRKVLQQLCCKTCTFQG</variation>
    <location>
        <begin position="878"/>
        <end position="915"/>
    </location>
</feature>
<feature type="splice variant" id="VSP_005439" description="In isoform PC5A." evidence="7 8">
    <location>
        <begin position="916"/>
        <end position="1877"/>
    </location>
</feature>
<feature type="sequence conflict" description="In Ref. 1; BAA04507, 2; BAA02143 and 3; AAA74636." evidence="9" ref="1 2 3">
    <original>N</original>
    <variation>D</variation>
    <location>
        <position position="704"/>
    </location>
</feature>
<feature type="sequence conflict" description="In Ref. 1; BAA04507." evidence="9" ref="1">
    <original>A</original>
    <variation>T</variation>
    <location>
        <position position="986"/>
    </location>
</feature>
<feature type="sequence conflict" description="In Ref. 1; BAA04507." evidence="9" ref="1">
    <original>V</original>
    <variation>I</variation>
    <location>
        <position position="1002"/>
    </location>
</feature>
<feature type="sequence conflict" description="In Ref. 1; BAA04507." evidence="9" ref="1">
    <original>N</original>
    <variation>T</variation>
    <location>
        <position position="1139"/>
    </location>
</feature>
<evidence type="ECO:0000250" key="1"/>
<evidence type="ECO:0000255" key="2"/>
<evidence type="ECO:0000255" key="3">
    <source>
        <dbReference type="PROSITE-ProRule" id="PRU01173"/>
    </source>
</evidence>
<evidence type="ECO:0000255" key="4">
    <source>
        <dbReference type="PROSITE-ProRule" id="PRU01240"/>
    </source>
</evidence>
<evidence type="ECO:0000269" key="5">
    <source>
    </source>
</evidence>
<evidence type="ECO:0000269" key="6">
    <source>
    </source>
</evidence>
<evidence type="ECO:0000303" key="7">
    <source>
    </source>
</evidence>
<evidence type="ECO:0000303" key="8">
    <source>
    </source>
</evidence>
<evidence type="ECO:0000305" key="9"/>
<keyword id="KW-0025">Alternative splicing</keyword>
<keyword id="KW-0165">Cleavage on pair of basic residues</keyword>
<keyword id="KW-0903">Direct protein sequencing</keyword>
<keyword id="KW-0325">Glycoprotein</keyword>
<keyword id="KW-0378">Hydrolase</keyword>
<keyword id="KW-0472">Membrane</keyword>
<keyword id="KW-0635">Pregnancy</keyword>
<keyword id="KW-0645">Protease</keyword>
<keyword id="KW-1185">Reference proteome</keyword>
<keyword id="KW-0677">Repeat</keyword>
<keyword id="KW-0964">Secreted</keyword>
<keyword id="KW-0720">Serine protease</keyword>
<keyword id="KW-0732">Signal</keyword>
<keyword id="KW-0812">Transmembrane</keyword>
<keyword id="KW-1133">Transmembrane helix</keyword>
<keyword id="KW-0865">Zymogen</keyword>
<gene>
    <name type="primary">Pcsk5</name>
</gene>
<sequence>MDWDWGNRCSRPGRRDLLCVLALLAGCLLPVCRTRVYTNHWAVKIAGGFAEADRIASKYGFINVGQIGALKDYYHFYHSRTIKRSVLSSRGTHSFISMEPKVEWIQQQVVKKRTKRDYDLSHAQSTYFNDPKWPSMWYMHCSDNTHPCQSDMNIEGAWKRGYTGKNIVVTILDDGIERTHPDLMQNYDALASCDVNGNDLDPMPRYDASNENKHGTRCAGEVAATANNSHCTVGIAFNAKIGGVRMLDGDVTDMVEAKSVSYNPQHVHIYSASWGPDDDGKTVDGPAPLTRQAFENGVRMGRRGLGSVFVWASGNGGRSKDHCSCDGYTNSIYTISISSTAESGKKPWYLEECSSTLATTYSSGESYDKKIITTDLRQRCTDNHTGTSASAPMAAGIIALALEANPFLTWRDVQHVIVRTSRAGHLNANDWKTNAAGFKVSHLYGFGLMDAEAMVMEAEKWTTVPQQHVCVESTDRQIKTIRPNSAVRSIYKASGCSDNPNHHVNYLEHVVVRITITHPRRGDLAIYLTSPSGTRSQLLANRLFDHSMEGFKNWEFMTIHCWGERAAGDWVLEVYDTPSQLRNFKTPGKLKEWSLVLYGTSVQPYSPTNEFPKVERFRYSRVEDPTDDYGAEDYAGPCDPECSEVGCDGPGPDHCSDCLHYYYKLKNNTRICVSSCPPGHYHADKKRCRKCAPNCESCFGSHGNQCLSCKYGYFLNEETSSCVTQCPDGSYEDIKKNVCGKCSENCKACIGFHNCTECKGGLSLQGSRCSVTCEDGQFFNGHDCQPCHRFCATCSGAGADGCINCTEGYVMEEGRCVQSCSVSYYLDHSSEGGYKSCKRCDNSCLTCNGPGFKNCSSCPSGYLLDLGTCQMGAICKDGEYIDDQGHCQTCEASCAKCWGPTQEDCISCPVTRVLDDGRCVMNCPSWKFEFKKQCHPCHYTCQGCQGSGPSNCTSCRADKHGQERFLYHGECLENCPVGHYPAKGHACLPCPDNCELCYNPHVCSRCMSGYVIIPPNHTCQKLECRQGEFQDSEYEECMPCEEGCLGCTEDDPGACTSCATGYYMFERHCYKACPEKTFGVKWECRACGTNCGSCDQHECYWCEEGFFLSGGSCVQDCGPGFHGDQELGECKPCHRACENCTGSGYNQCSSCQEGLQLWHGTCLWSTWPQVEGKDWNEAVPTEKPSLVRSLLQDRRKWKVQIKRDATSQNQPCHSSCKTCNGSLCASCPTGMYLWLQACVPSCPQGTWPSVTSGSCEKCSEDCVSCSGADLCQQCLSQPDNTLLLHEGRCYHSCPEGFYAKDGVCEHCSSPCKTCEGNATSCNSCEGDFVLDHGVCWKTCPEKHVAVEGVCKHCPERCQDCIHEKTCKECMPDFFLYNDMCHRSCPKSFYPDMRQCVPCHKNCLECNGPKEDDCKVCADTSKALHNGLCLDECPEGTYKEEENDECRDCPESCLICSSAWTCLACREGFTVVHDVCTAPKECAAVEYWDEGSHRCQPCHKKCSRCSGPSEDQCYTCPRETFLLNTTCVKECPEGYHTDKDSQQCVLCHSSCRTCEGPHSMQCLSCRPGWFQLGKECLLQCRDGYYGESTSGRCEKCDKSCKSCRGPRPTDCQSCDTFFFLLRSKGQCHRACPEHYYADQHAQTCERCHPTCDKCSGKEAWSCLSCVWSYHLLKGICIPECIVGEYREGKGENFNCKKCHESCMECKGPGSKNCTGCSAGLLLDMDDNRCLHCCNASHSRRSQDCCDCQSSTDECILPAREAEFYEHTKTALLVTSGAMLLLLLGAAAVVWRKSRSRPVAKGRYEKLAEPTVSYSSYRSSYLDEDQVIEYRDRDYDEDDEDDIVYMGQDGTVYRKFKYGLLDETEDDELEYDDESYSYQ</sequence>
<reference key="1">
    <citation type="journal article" date="1993" name="FEBS Lett.">
        <title>Identification of an isoform with an extremely large Cys-rich region of PC6, a Kex2-like processing endoprotease.</title>
        <authorList>
            <person name="Nakagawa T."/>
            <person name="Murakami K."/>
            <person name="Nakayama K."/>
        </authorList>
    </citation>
    <scope>NUCLEOTIDE SEQUENCE [MRNA] OF 330-1877 (ISOFORM PC5B)</scope>
    <source>
        <strain>ICR</strain>
        <tissue>Intestine</tissue>
    </source>
</reference>
<reference key="2">
    <citation type="journal article" date="1993" name="J. Biochem.">
        <title>Identification and functional expression of a new member of the mammalian Kex2-like processing endoprotease family: its striking structural similarity to PACE4.</title>
        <authorList>
            <person name="Nakagawa T."/>
            <person name="Hosaka M."/>
            <person name="Torii S."/>
            <person name="Watanabe T."/>
            <person name="Murakami K."/>
            <person name="Nakayama K."/>
        </authorList>
    </citation>
    <scope>NUCLEOTIDE SEQUENCE [MRNA] (ISOFORM PC5A)</scope>
    <source>
        <tissue>Brain</tissue>
        <tissue>Intestine</tissue>
    </source>
</reference>
<reference key="3">
    <citation type="journal article" date="1993" name="Proc. Natl. Acad. Sci. U.S.A.">
        <title>cDNA structure of the mouse and rat subtilisin/kexin-like PC5: a candidate proprotein convertase expressed in endocrine and nonendocrine cells.</title>
        <authorList>
            <person name="Lusson J."/>
            <person name="Vieau D."/>
            <person name="Hamelin J."/>
            <person name="Day R."/>
            <person name="Chretien M."/>
            <person name="Seidah N.G."/>
        </authorList>
    </citation>
    <scope>NUCLEOTIDE SEQUENCE [MRNA] (ISOFORM PC5A)</scope>
    <source>
        <tissue>Adrenal cortex</tissue>
    </source>
</reference>
<reference key="4">
    <citation type="journal article" date="2009" name="PLoS Biol.">
        <title>Lineage-specific biology revealed by a finished genome assembly of the mouse.</title>
        <authorList>
            <person name="Church D.M."/>
            <person name="Goodstadt L."/>
            <person name="Hillier L.W."/>
            <person name="Zody M.C."/>
            <person name="Goldstein S."/>
            <person name="She X."/>
            <person name="Bult C.J."/>
            <person name="Agarwala R."/>
            <person name="Cherry J.L."/>
            <person name="DiCuccio M."/>
            <person name="Hlavina W."/>
            <person name="Kapustin Y."/>
            <person name="Meric P."/>
            <person name="Maglott D."/>
            <person name="Birtle Z."/>
            <person name="Marques A.C."/>
            <person name="Graves T."/>
            <person name="Zhou S."/>
            <person name="Teague B."/>
            <person name="Potamousis K."/>
            <person name="Churas C."/>
            <person name="Place M."/>
            <person name="Herschleb J."/>
            <person name="Runnheim R."/>
            <person name="Forrest D."/>
            <person name="Amos-Landgraf J."/>
            <person name="Schwartz D.C."/>
            <person name="Cheng Z."/>
            <person name="Lindblad-Toh K."/>
            <person name="Eichler E.E."/>
            <person name="Ponting C.P."/>
        </authorList>
    </citation>
    <scope>NUCLEOTIDE SEQUENCE [LARGE SCALE GENOMIC DNA]</scope>
    <source>
        <strain>C57BL/6J</strain>
    </source>
</reference>
<reference key="5">
    <citation type="journal article" date="1996" name="J. Cell Biol.">
        <title>The isoforms of proprotein convertase PC5 are sorted to different subcellular compartments.</title>
        <authorList>
            <person name="De Bie I."/>
            <person name="Marcinkiewicz M."/>
            <person name="Malide D."/>
            <person name="Lazure C."/>
            <person name="Nakayama K."/>
            <person name="Bendayan M."/>
            <person name="Seidah N.G."/>
        </authorList>
    </citation>
    <scope>PARTIAL PROTEIN SEQUENCE</scope>
    <scope>SUBCELLULAR LOCATION</scope>
</reference>
<reference key="6">
    <citation type="journal article" date="1996" name="J. Cell Biol.">
        <title>SPC4, SPC6, and the novel protease SPC7 are coexpressed with bone morphogenetic proteins at distinct sites during embryogenesis.</title>
        <authorList>
            <person name="Constam D.B."/>
            <person name="Calfon M."/>
            <person name="Robertson E.J."/>
        </authorList>
    </citation>
    <scope>DEVELOPMENTAL STAGE</scope>
</reference>
<reference key="7">
    <citation type="journal article" date="1997" name="Dev. Genet.">
        <title>Murine subtilisin-like proteinase SPC6 is expressed during embryonic implantation, somitogenesis, and skeletal formation.</title>
        <authorList>
            <person name="Rancourt S.L."/>
            <person name="Rancourt D.E."/>
        </authorList>
    </citation>
    <scope>DEVELOPMENTAL STAGE</scope>
</reference>